<comment type="function">
    <text evidence="1">Key component of the proton channel; it plays a direct role in the translocation of protons across the membrane.</text>
</comment>
<comment type="subunit">
    <text evidence="1">F-type ATPases have 2 components, CF(1) - the catalytic core - and CF(0) - the membrane proton channel. CF(1) has five subunits: alpha(3), beta(3), gamma(1), delta(1), epsilon(1). CF(0) has three main subunits: a(1), b(2) and c(9-12). The alpha and beta chains form an alternating ring which encloses part of the gamma chain. CF(1) is attached to CF(0) by a central stalk formed by the gamma and epsilon chains, while a peripheral stalk is formed by the delta and b chains.</text>
</comment>
<comment type="subcellular location">
    <subcellularLocation>
        <location evidence="1">Cell membrane</location>
        <topology evidence="1">Multi-pass membrane protein</topology>
    </subcellularLocation>
</comment>
<comment type="similarity">
    <text evidence="1">Belongs to the ATPase A chain family.</text>
</comment>
<organism>
    <name type="scientific">Mycobacterium tuberculosis (strain CDC 1551 / Oshkosh)</name>
    <dbReference type="NCBI Taxonomy" id="83331"/>
    <lineage>
        <taxon>Bacteria</taxon>
        <taxon>Bacillati</taxon>
        <taxon>Actinomycetota</taxon>
        <taxon>Actinomycetes</taxon>
        <taxon>Mycobacteriales</taxon>
        <taxon>Mycobacteriaceae</taxon>
        <taxon>Mycobacterium</taxon>
        <taxon>Mycobacterium tuberculosis complex</taxon>
    </lineage>
</organism>
<name>ATP6_MYCTO</name>
<gene>
    <name evidence="1" type="primary">atpB</name>
    <name type="ordered locus">MT1344</name>
</gene>
<proteinExistence type="inferred from homology"/>
<dbReference type="EMBL" id="AE000516">
    <property type="protein sequence ID" value="AAK45606.1"/>
    <property type="molecule type" value="Genomic_DNA"/>
</dbReference>
<dbReference type="PIR" id="D70774">
    <property type="entry name" value="D70774"/>
</dbReference>
<dbReference type="RefSeq" id="WP_003406681.1">
    <property type="nucleotide sequence ID" value="NZ_KK341227.1"/>
</dbReference>
<dbReference type="SMR" id="P9WPV6"/>
<dbReference type="GeneID" id="45425278"/>
<dbReference type="KEGG" id="mtc:MT1344"/>
<dbReference type="PATRIC" id="fig|83331.31.peg.1450"/>
<dbReference type="HOGENOM" id="CLU_041018_2_3_11"/>
<dbReference type="Proteomes" id="UP000001020">
    <property type="component" value="Chromosome"/>
</dbReference>
<dbReference type="GO" id="GO:0005886">
    <property type="term" value="C:plasma membrane"/>
    <property type="evidence" value="ECO:0007669"/>
    <property type="project" value="UniProtKB-SubCell"/>
</dbReference>
<dbReference type="GO" id="GO:0045259">
    <property type="term" value="C:proton-transporting ATP synthase complex"/>
    <property type="evidence" value="ECO:0007669"/>
    <property type="project" value="UniProtKB-KW"/>
</dbReference>
<dbReference type="GO" id="GO:0046933">
    <property type="term" value="F:proton-transporting ATP synthase activity, rotational mechanism"/>
    <property type="evidence" value="ECO:0007669"/>
    <property type="project" value="UniProtKB-UniRule"/>
</dbReference>
<dbReference type="GO" id="GO:0042777">
    <property type="term" value="P:proton motive force-driven plasma membrane ATP synthesis"/>
    <property type="evidence" value="ECO:0007669"/>
    <property type="project" value="TreeGrafter"/>
</dbReference>
<dbReference type="CDD" id="cd00310">
    <property type="entry name" value="ATP-synt_Fo_a_6"/>
    <property type="match status" value="1"/>
</dbReference>
<dbReference type="FunFam" id="1.20.120.220:FF:000009">
    <property type="entry name" value="ATP synthase subunit a"/>
    <property type="match status" value="1"/>
</dbReference>
<dbReference type="Gene3D" id="1.20.120.220">
    <property type="entry name" value="ATP synthase, F0 complex, subunit A"/>
    <property type="match status" value="1"/>
</dbReference>
<dbReference type="HAMAP" id="MF_01393">
    <property type="entry name" value="ATP_synth_a_bact"/>
    <property type="match status" value="1"/>
</dbReference>
<dbReference type="InterPro" id="IPR045082">
    <property type="entry name" value="ATP_syn_F0_a_bact/chloroplast"/>
</dbReference>
<dbReference type="InterPro" id="IPR000568">
    <property type="entry name" value="ATP_synth_F0_asu"/>
</dbReference>
<dbReference type="InterPro" id="IPR023011">
    <property type="entry name" value="ATP_synth_F0_asu_AS"/>
</dbReference>
<dbReference type="InterPro" id="IPR035908">
    <property type="entry name" value="F0_ATP_A_sf"/>
</dbReference>
<dbReference type="NCBIfam" id="TIGR01131">
    <property type="entry name" value="ATP_synt_6_or_A"/>
    <property type="match status" value="1"/>
</dbReference>
<dbReference type="PANTHER" id="PTHR42823">
    <property type="entry name" value="ATP SYNTHASE SUBUNIT A, CHLOROPLASTIC"/>
    <property type="match status" value="1"/>
</dbReference>
<dbReference type="PANTHER" id="PTHR42823:SF3">
    <property type="entry name" value="ATP SYNTHASE SUBUNIT A, CHLOROPLASTIC"/>
    <property type="match status" value="1"/>
</dbReference>
<dbReference type="Pfam" id="PF00119">
    <property type="entry name" value="ATP-synt_A"/>
    <property type="match status" value="1"/>
</dbReference>
<dbReference type="PRINTS" id="PR00123">
    <property type="entry name" value="ATPASEA"/>
</dbReference>
<dbReference type="SUPFAM" id="SSF81336">
    <property type="entry name" value="F1F0 ATP synthase subunit A"/>
    <property type="match status" value="1"/>
</dbReference>
<dbReference type="PROSITE" id="PS00449">
    <property type="entry name" value="ATPASE_A"/>
    <property type="match status" value="1"/>
</dbReference>
<sequence>MTETILAAQIEVGEHHTATWLGMTVNTDTVLSTAIAGLIVIALAFYLRAKVTSTDVPGGVQLFFEAITIQMRNQVESAIGMRIAPFVLPLAVTIFVFILISNWLAVLPVQYTDKHGHTTELLKSAAADINYVLALALFVFVCYHTAGIWRRGIVGHPIKLLKGHVTLLAPINLVEEVAKPISLSLRLFGNIFAGGILVALIALFPPYIMWAPNAIWKAFDLFVGAIQAFIFALLTILYFSQAMELEEEHH</sequence>
<accession>P9WPV6</accession>
<accession>L0T691</accession>
<accession>P63654</accession>
<accession>Q10591</accession>
<evidence type="ECO:0000255" key="1">
    <source>
        <dbReference type="HAMAP-Rule" id="MF_01393"/>
    </source>
</evidence>
<keyword id="KW-0066">ATP synthesis</keyword>
<keyword id="KW-1003">Cell membrane</keyword>
<keyword id="KW-0138">CF(0)</keyword>
<keyword id="KW-0375">Hydrogen ion transport</keyword>
<keyword id="KW-0406">Ion transport</keyword>
<keyword id="KW-0472">Membrane</keyword>
<keyword id="KW-1185">Reference proteome</keyword>
<keyword id="KW-0812">Transmembrane</keyword>
<keyword id="KW-1133">Transmembrane helix</keyword>
<keyword id="KW-0813">Transport</keyword>
<protein>
    <recommendedName>
        <fullName evidence="1">ATP synthase subunit a</fullName>
    </recommendedName>
    <alternativeName>
        <fullName evidence="1">ATP synthase F0 sector subunit a</fullName>
    </alternativeName>
    <alternativeName>
        <fullName evidence="1">F-ATPase subunit 6</fullName>
    </alternativeName>
</protein>
<reference key="1">
    <citation type="journal article" date="2002" name="J. Bacteriol.">
        <title>Whole-genome comparison of Mycobacterium tuberculosis clinical and laboratory strains.</title>
        <authorList>
            <person name="Fleischmann R.D."/>
            <person name="Alland D."/>
            <person name="Eisen J.A."/>
            <person name="Carpenter L."/>
            <person name="White O."/>
            <person name="Peterson J.D."/>
            <person name="DeBoy R.T."/>
            <person name="Dodson R.J."/>
            <person name="Gwinn M.L."/>
            <person name="Haft D.H."/>
            <person name="Hickey E.K."/>
            <person name="Kolonay J.F."/>
            <person name="Nelson W.C."/>
            <person name="Umayam L.A."/>
            <person name="Ermolaeva M.D."/>
            <person name="Salzberg S.L."/>
            <person name="Delcher A."/>
            <person name="Utterback T.R."/>
            <person name="Weidman J.F."/>
            <person name="Khouri H.M."/>
            <person name="Gill J."/>
            <person name="Mikula A."/>
            <person name="Bishai W."/>
            <person name="Jacobs W.R. Jr."/>
            <person name="Venter J.C."/>
            <person name="Fraser C.M."/>
        </authorList>
    </citation>
    <scope>NUCLEOTIDE SEQUENCE [LARGE SCALE GENOMIC DNA]</scope>
    <source>
        <strain>CDC 1551 / Oshkosh</strain>
    </source>
</reference>
<feature type="chain" id="PRO_0000426899" description="ATP synthase subunit a">
    <location>
        <begin position="1"/>
        <end position="250"/>
    </location>
</feature>
<feature type="transmembrane region" description="Helical" evidence="1">
    <location>
        <begin position="27"/>
        <end position="47"/>
    </location>
</feature>
<feature type="transmembrane region" description="Helical" evidence="1">
    <location>
        <begin position="86"/>
        <end position="106"/>
    </location>
</feature>
<feature type="transmembrane region" description="Helical" evidence="1">
    <location>
        <begin position="129"/>
        <end position="149"/>
    </location>
</feature>
<feature type="transmembrane region" description="Helical" evidence="1">
    <location>
        <begin position="191"/>
        <end position="211"/>
    </location>
</feature>
<feature type="transmembrane region" description="Helical" evidence="1">
    <location>
        <begin position="219"/>
        <end position="239"/>
    </location>
</feature>